<reference key="1">
    <citation type="submission" date="2007-06" db="EMBL/GenBank/DDBJ databases">
        <authorList>
            <consortium name="NIH - Mammalian Gene Collection (MGC) project"/>
        </authorList>
    </citation>
    <scope>NUCLEOTIDE SEQUENCE [LARGE SCALE MRNA]</scope>
    <source>
        <strain>Hereford</strain>
        <tissue>Hippocampus</tissue>
    </source>
</reference>
<proteinExistence type="evidence at transcript level"/>
<feature type="chain" id="PRO_0000333199" description="Intraflagellar transport protein 70B">
    <location>
        <begin position="1"/>
        <end position="664"/>
    </location>
</feature>
<feature type="repeat" description="TPR 1">
    <location>
        <begin position="11"/>
        <end position="44"/>
    </location>
</feature>
<feature type="repeat" description="TPR 2">
    <location>
        <begin position="45"/>
        <end position="78"/>
    </location>
</feature>
<feature type="repeat" description="TPR 3">
    <location>
        <begin position="153"/>
        <end position="186"/>
    </location>
</feature>
<feature type="repeat" description="TPR 4">
    <location>
        <begin position="188"/>
        <end position="220"/>
    </location>
</feature>
<feature type="repeat" description="TPR 5">
    <location>
        <begin position="385"/>
        <end position="418"/>
    </location>
</feature>
<feature type="repeat" description="TPR 6">
    <location>
        <begin position="423"/>
        <end position="456"/>
    </location>
</feature>
<feature type="repeat" description="TPR 7">
    <location>
        <begin position="458"/>
        <end position="491"/>
    </location>
</feature>
<feature type="repeat" description="TPR 8">
    <location>
        <begin position="543"/>
        <end position="576"/>
    </location>
</feature>
<feature type="coiled-coil region" evidence="3">
    <location>
        <begin position="509"/>
        <end position="532"/>
    </location>
</feature>
<name>IT70B_BOVIN</name>
<sequence length="664" mass="75851">MAGLGGSQIPDGEFTAVVYRLIRDARYAEAVQLLGGELQRSPRSRAGLSLLGYCYYRLQEFALAAECYEQLGQLHPELEQYRLYQAQALYKACLYPEATRVSLLLLDNPAYHNRVLRLQAAIKYSEADLPGARSLVEQLLSEGGEDSGGENELDGQVNLGCLLYKEGHYEAACSKFSAALQASGYRPDLSYNLALAYYSSRHYALALKHIADIIEHGIRQHPELGVGMTTVGIDVRSVGNTVVLHQTALVEAFNLRAAIEYQLRNYEAAQEALTDMPPRAEEELDPVTLHNQALMNMDARPTEGFEKLQFLLQQIPFPPETFGNLLLLYCEYEYFDLAADVLAENAHLTYEFLTPYLYDFLDAMVTCQTAPEEAFIKLDGLAGMLTEQLRKLTIQVQEARHNKDDEAVKKAVNEYEDTLEKYIPVLMAQAKIYWNLENYPMVEKLFRKSVEFCNDHHVWKLNVAHVLFMQENKYKEAIGFYEPIVKKHYDNILNVSAIVLANLCVSYIMISQNEEAEELMRKIGKEEEQLSYDDPDKKIYHLCIVNLVIGTLYCAKGNYDFGISRVIKSLEPCNKKLGTDTWYYAKRCFLSLLENMSKHTIMLRDSVIQECVQFLEHCELYGRDIPAVIEETLEEERMHIGKNTVTYESRELKALIYEIIGWNM</sequence>
<comment type="function">
    <text evidence="1">Required for polyglutamylation of axonemal tubulin. Plays a role in anterograde intraflagellar transport (IFT), the process by which cilia precursors are transported from the base of the cilium to the site of their incorporation at the tip.</text>
</comment>
<comment type="subunit">
    <text evidence="2">Interacts with the IFT B complex components IFT27, IFT46, IFT74, IFT52, IFT57, IFT80, IFT81 and IFT88 (By similarity). Interacts with KIF17 (By similarity).</text>
</comment>
<comment type="subcellular location">
    <subcellularLocation>
        <location evidence="1">Cell projection</location>
        <location evidence="1">Cilium</location>
    </subcellularLocation>
</comment>
<comment type="similarity">
    <text evidence="4">Belongs to the TTC30/dfy-1/fleer family.</text>
</comment>
<gene>
    <name type="primary">IFT70B</name>
    <name type="synonym">TTC30B</name>
</gene>
<evidence type="ECO:0000250" key="1"/>
<evidence type="ECO:0000250" key="2">
    <source>
        <dbReference type="UniProtKB" id="Q9CY00"/>
    </source>
</evidence>
<evidence type="ECO:0000255" key="3"/>
<evidence type="ECO:0000305" key="4"/>
<keyword id="KW-0966">Cell projection</keyword>
<keyword id="KW-0969">Cilium</keyword>
<keyword id="KW-0970">Cilium biogenesis/degradation</keyword>
<keyword id="KW-0175">Coiled coil</keyword>
<keyword id="KW-1185">Reference proteome</keyword>
<keyword id="KW-0677">Repeat</keyword>
<keyword id="KW-0802">TPR repeat</keyword>
<dbReference type="EMBL" id="BC146102">
    <property type="protein sequence ID" value="AAI46103.1"/>
    <property type="molecule type" value="mRNA"/>
</dbReference>
<dbReference type="RefSeq" id="NP_001092561.1">
    <property type="nucleotide sequence ID" value="NM_001099091.1"/>
</dbReference>
<dbReference type="SMR" id="A6H739"/>
<dbReference type="FunCoup" id="A6H739">
    <property type="interactions" value="524"/>
</dbReference>
<dbReference type="STRING" id="9913.ENSBTAP00000017865"/>
<dbReference type="PaxDb" id="9913-ENSBTAP00000017865"/>
<dbReference type="GeneID" id="538713"/>
<dbReference type="KEGG" id="bta:538713"/>
<dbReference type="CTD" id="150737"/>
<dbReference type="VEuPathDB" id="HostDB:ENSBTAG00000027696"/>
<dbReference type="eggNOG" id="KOG4340">
    <property type="taxonomic scope" value="Eukaryota"/>
</dbReference>
<dbReference type="HOGENOM" id="CLU_023760_0_0_1"/>
<dbReference type="InParanoid" id="A6H739"/>
<dbReference type="OMA" id="LEPCNKK"/>
<dbReference type="OrthoDB" id="10249577at2759"/>
<dbReference type="TreeFam" id="TF314592"/>
<dbReference type="Reactome" id="R-BTA-5620924">
    <property type="pathway name" value="Intraflagellar transport"/>
</dbReference>
<dbReference type="Proteomes" id="UP000009136">
    <property type="component" value="Chromosome 2"/>
</dbReference>
<dbReference type="Bgee" id="ENSBTAG00000027696">
    <property type="expression patterns" value="Expressed in semen and 96 other cell types or tissues"/>
</dbReference>
<dbReference type="GO" id="GO:0005879">
    <property type="term" value="C:axonemal microtubule"/>
    <property type="evidence" value="ECO:0000318"/>
    <property type="project" value="GO_Central"/>
</dbReference>
<dbReference type="GO" id="GO:0030992">
    <property type="term" value="C:intraciliary transport particle B"/>
    <property type="evidence" value="ECO:0000318"/>
    <property type="project" value="GO_Central"/>
</dbReference>
<dbReference type="GO" id="GO:0120170">
    <property type="term" value="F:intraciliary transport particle B binding"/>
    <property type="evidence" value="ECO:0000318"/>
    <property type="project" value="GO_Central"/>
</dbReference>
<dbReference type="GO" id="GO:0042073">
    <property type="term" value="P:intraciliary transport"/>
    <property type="evidence" value="ECO:0000318"/>
    <property type="project" value="GO_Central"/>
</dbReference>
<dbReference type="FunFam" id="1.25.40.10:FF:000226">
    <property type="entry name" value="Tetratricopeptide repeat protein 30A"/>
    <property type="match status" value="1"/>
</dbReference>
<dbReference type="FunFam" id="1.25.40.10:FF:000211">
    <property type="entry name" value="tetratricopeptide repeat protein 30B"/>
    <property type="match status" value="1"/>
</dbReference>
<dbReference type="Gene3D" id="1.25.40.10">
    <property type="entry name" value="Tetratricopeptide repeat domain"/>
    <property type="match status" value="3"/>
</dbReference>
<dbReference type="InterPro" id="IPR011990">
    <property type="entry name" value="TPR-like_helical_dom_sf"/>
</dbReference>
<dbReference type="InterPro" id="IPR019734">
    <property type="entry name" value="TPR_rpt"/>
</dbReference>
<dbReference type="InterPro" id="IPR039941">
    <property type="entry name" value="TT30"/>
</dbReference>
<dbReference type="PANTHER" id="PTHR20931">
    <property type="entry name" value="TETRATRICOPEPTIDE REPEAT PROTEIN 30"/>
    <property type="match status" value="1"/>
</dbReference>
<dbReference type="PANTHER" id="PTHR20931:SF0">
    <property type="entry name" value="TETRATRICOPEPTIDE REPEAT PROTEIN 30"/>
    <property type="match status" value="1"/>
</dbReference>
<dbReference type="SMART" id="SM00028">
    <property type="entry name" value="TPR"/>
    <property type="match status" value="4"/>
</dbReference>
<dbReference type="SUPFAM" id="SSF48452">
    <property type="entry name" value="TPR-like"/>
    <property type="match status" value="3"/>
</dbReference>
<dbReference type="PROSITE" id="PS50293">
    <property type="entry name" value="TPR_REGION"/>
    <property type="match status" value="2"/>
</dbReference>
<protein>
    <recommendedName>
        <fullName>Intraflagellar transport protein 70B</fullName>
    </recommendedName>
    <alternativeName>
        <fullName>Tetratricopeptide repeat protein 30B</fullName>
        <shortName>TPR repeat protein 30B</shortName>
    </alternativeName>
</protein>
<accession>A6H739</accession>
<organism>
    <name type="scientific">Bos taurus</name>
    <name type="common">Bovine</name>
    <dbReference type="NCBI Taxonomy" id="9913"/>
    <lineage>
        <taxon>Eukaryota</taxon>
        <taxon>Metazoa</taxon>
        <taxon>Chordata</taxon>
        <taxon>Craniata</taxon>
        <taxon>Vertebrata</taxon>
        <taxon>Euteleostomi</taxon>
        <taxon>Mammalia</taxon>
        <taxon>Eutheria</taxon>
        <taxon>Laurasiatheria</taxon>
        <taxon>Artiodactyla</taxon>
        <taxon>Ruminantia</taxon>
        <taxon>Pecora</taxon>
        <taxon>Bovidae</taxon>
        <taxon>Bovinae</taxon>
        <taxon>Bos</taxon>
    </lineage>
</organism>